<feature type="chain" id="PRO_0000437318" description="Homoserine O-acetyltransferase FUB5">
    <location>
        <begin position="1"/>
        <end position="427"/>
    </location>
</feature>
<feature type="domain" description="AB hydrolase-1" evidence="1">
    <location>
        <begin position="77"/>
        <end position="400"/>
    </location>
</feature>
<feature type="region of interest" description="Disordered" evidence="2">
    <location>
        <begin position="1"/>
        <end position="35"/>
    </location>
</feature>
<feature type="region of interest" description="Disordered" evidence="2">
    <location>
        <begin position="260"/>
        <end position="297"/>
    </location>
</feature>
<feature type="compositionally biased region" description="Low complexity" evidence="2">
    <location>
        <begin position="1"/>
        <end position="13"/>
    </location>
</feature>
<feature type="compositionally biased region" description="Polar residues" evidence="2">
    <location>
        <begin position="276"/>
        <end position="287"/>
    </location>
</feature>
<feature type="active site" description="Nucleophile" evidence="1">
    <location>
        <position position="175"/>
    </location>
</feature>
<feature type="active site" evidence="1">
    <location>
        <position position="367"/>
    </location>
</feature>
<feature type="active site" evidence="1">
    <location>
        <position position="396"/>
    </location>
</feature>
<keyword id="KW-1185">Reference proteome</keyword>
<keyword id="KW-0808">Transferase</keyword>
<gene>
    <name evidence="12" type="primary">FUB5</name>
    <name type="ORF">FFUJ_02109</name>
</gene>
<dbReference type="EC" id="2.3.1.31" evidence="14"/>
<dbReference type="EMBL" id="HF679025">
    <property type="protein sequence ID" value="CCT65187.1"/>
    <property type="molecule type" value="Genomic_DNA"/>
</dbReference>
<dbReference type="SMR" id="S0DUX2"/>
<dbReference type="STRING" id="1279085.S0DUX2"/>
<dbReference type="ESTHER" id="gibf5-fub5">
    <property type="family name" value="Homoserine_transacetylase"/>
</dbReference>
<dbReference type="EnsemblFungi" id="CCT65187">
    <property type="protein sequence ID" value="CCT65187"/>
    <property type="gene ID" value="FFUJ_02109"/>
</dbReference>
<dbReference type="VEuPathDB" id="FungiDB:FFUJ_02109"/>
<dbReference type="HOGENOM" id="CLU_028760_5_0_1"/>
<dbReference type="Proteomes" id="UP000016800">
    <property type="component" value="Chromosome 3"/>
</dbReference>
<dbReference type="GO" id="GO:0004414">
    <property type="term" value="F:homoserine O-acetyltransferase activity"/>
    <property type="evidence" value="ECO:0007669"/>
    <property type="project" value="UniProtKB-EC"/>
</dbReference>
<dbReference type="GO" id="GO:0009092">
    <property type="term" value="P:homoserine metabolic process"/>
    <property type="evidence" value="ECO:0007669"/>
    <property type="project" value="TreeGrafter"/>
</dbReference>
<dbReference type="GO" id="GO:0009086">
    <property type="term" value="P:methionine biosynthetic process"/>
    <property type="evidence" value="ECO:0007669"/>
    <property type="project" value="TreeGrafter"/>
</dbReference>
<dbReference type="Gene3D" id="3.40.50.1820">
    <property type="entry name" value="alpha/beta hydrolase"/>
    <property type="match status" value="1"/>
</dbReference>
<dbReference type="HAMAP" id="MF_00296">
    <property type="entry name" value="MetX_acyltransf"/>
    <property type="match status" value="1"/>
</dbReference>
<dbReference type="InterPro" id="IPR000073">
    <property type="entry name" value="AB_hydrolase_1"/>
</dbReference>
<dbReference type="InterPro" id="IPR029058">
    <property type="entry name" value="AB_hydrolase_fold"/>
</dbReference>
<dbReference type="InterPro" id="IPR008220">
    <property type="entry name" value="HAT_MetX-like"/>
</dbReference>
<dbReference type="NCBIfam" id="TIGR01392">
    <property type="entry name" value="homoserO_Ac_trn"/>
    <property type="match status" value="1"/>
</dbReference>
<dbReference type="NCBIfam" id="NF001209">
    <property type="entry name" value="PRK00175.1"/>
    <property type="match status" value="1"/>
</dbReference>
<dbReference type="PANTHER" id="PTHR32268">
    <property type="entry name" value="HOMOSERINE O-ACETYLTRANSFERASE"/>
    <property type="match status" value="1"/>
</dbReference>
<dbReference type="PANTHER" id="PTHR32268:SF11">
    <property type="entry name" value="HOMOSERINE O-ACETYLTRANSFERASE"/>
    <property type="match status" value="1"/>
</dbReference>
<dbReference type="Pfam" id="PF00561">
    <property type="entry name" value="Abhydrolase_1"/>
    <property type="match status" value="1"/>
</dbReference>
<dbReference type="PIRSF" id="PIRSF000443">
    <property type="entry name" value="Homoser_Ac_trans"/>
    <property type="match status" value="1"/>
</dbReference>
<dbReference type="SUPFAM" id="SSF53474">
    <property type="entry name" value="alpha/beta-Hydrolases"/>
    <property type="match status" value="1"/>
</dbReference>
<sequence>MTTTTTAPALPTPIHDGLGNGTTYERSIPRPVNPFSNRVPGREIITVPNFTLESGVEMRNVPVAYMSWGKLSPKANNVMIICHALSGSADVSDWWGPLLGPGKAFDTDKFFVICMNSLGSPYGTASPVTAKNGDYSEGWYGADFPATTIRDDVRLHKLVLDRLGVRKVAAVIGGSMGGMHVLEWAFFGKDYVRCIVPAATSSHQSAWAIGWGEAQRHAIRSDVKYKNGRYGFDDPPILGLEAARMTALLTYRSRDSLERRFGRDTGNKKKAKNKGSETLPSNSTPIHSQGGADETPVAFDRADSNFAAQSYLRYQAKKFSDRFDSNCYIALTNKLDTHDLARGRTRTITEALSLIEQPTLVLGIRSDGLYTLAEQEQIARTVPNAKLREIVSDDGHDAFLIEWSQLNWLLVGFLHESLPDIMQRAAL</sequence>
<accession>S0DUX2</accession>
<reference key="1">
    <citation type="journal article" date="2013" name="PLoS Pathog.">
        <title>Deciphering the cryptic genome: genome-wide analyses of the rice pathogen Fusarium fujikuroi reveal complex regulation of secondary metabolism and novel metabolites.</title>
        <authorList>
            <person name="Wiemann P."/>
            <person name="Sieber C.M.K."/>
            <person name="von Bargen K.W."/>
            <person name="Studt L."/>
            <person name="Niehaus E.-M."/>
            <person name="Espino J.J."/>
            <person name="Huss K."/>
            <person name="Michielse C.B."/>
            <person name="Albermann S."/>
            <person name="Wagner D."/>
            <person name="Bergner S.V."/>
            <person name="Connolly L.R."/>
            <person name="Fischer A."/>
            <person name="Reuter G."/>
            <person name="Kleigrewe K."/>
            <person name="Bald T."/>
            <person name="Wingfield B.D."/>
            <person name="Ophir R."/>
            <person name="Freeman S."/>
            <person name="Hippler M."/>
            <person name="Smith K.M."/>
            <person name="Brown D.W."/>
            <person name="Proctor R.H."/>
            <person name="Muensterkoetter M."/>
            <person name="Freitag M."/>
            <person name="Humpf H.-U."/>
            <person name="Gueldener U."/>
            <person name="Tudzynski B."/>
        </authorList>
    </citation>
    <scope>NUCLEOTIDE SEQUENCE [LARGE SCALE GENOMIC DNA]</scope>
    <source>
        <strain>CBS 195.34 / IMI 58289 / NRRL A-6831</strain>
    </source>
</reference>
<reference key="2">
    <citation type="journal article" date="2006" name="Planta">
        <title>Fusaric acid induces apoptosis in saffron root-tip cells: roles of caspase-like activity, cytochrome c, and H2O2.</title>
        <authorList>
            <person name="Samadi L."/>
            <person name="Shahsavan Behboodi B."/>
        </authorList>
    </citation>
    <scope>BIOTECHNOLOGY</scope>
</reference>
<reference key="3">
    <citation type="journal article" date="2008" name="J. Appl. Microbiol.">
        <title>Bikaverin and fusaric acid from Fusarium oxysporum show antioomycete activity against Phytophthora infestans.</title>
        <authorList>
            <person name="Son S.W."/>
            <person name="Kim H.Y."/>
            <person name="Choi G.J."/>
            <person name="Lim H.K."/>
            <person name="Jang K.S."/>
            <person name="Lee S.O."/>
            <person name="Lee S."/>
            <person name="Sung N.D."/>
            <person name="Kim J.C."/>
        </authorList>
    </citation>
    <scope>BIOTECHNOLOGY</scope>
</reference>
<reference key="4">
    <citation type="journal article" date="2011" name="Arch. Pharm. Res.">
        <title>Antimycobacterial activity of fusaric acid from a mangrove endophyte and its metal complexes.</title>
        <authorList>
            <person name="Pan J.H."/>
            <person name="Chen Y."/>
            <person name="Huang Y.H."/>
            <person name="Tao Y.W."/>
            <person name="Wang J."/>
            <person name="Li Y."/>
            <person name="Peng Y."/>
            <person name="Dong T."/>
            <person name="Lai X.M."/>
            <person name="Lin Y.C."/>
        </authorList>
    </citation>
    <scope>BIOTECHNOLOGY</scope>
</reference>
<reference key="5">
    <citation type="journal article" date="2011" name="Toxicon">
        <title>Phytotoxicity of fusaric acid and analogs to cotton.</title>
        <authorList>
            <person name="Stipanovic R.D."/>
            <person name="Puckhaber L.S."/>
            <person name="Liu J."/>
            <person name="Bell A.A."/>
        </authorList>
    </citation>
    <scope>BIOTECHNOLOGY</scope>
</reference>
<reference key="6">
    <citation type="journal article" date="2012" name="Planta Med.">
        <title>In vitro acanthamoebicidal activity of fusaric acid and dehydrofusaric acid from an endophytic fungus Fusarium sp. Tlau3.</title>
        <authorList>
            <person name="Boonman N."/>
            <person name="Prachya S."/>
            <person name="Boonmee A."/>
            <person name="Kittakoop P."/>
            <person name="Wiyakrutta S."/>
            <person name="Sriubolmas N."/>
            <person name="Warit S."/>
            <person name="Dharmkrong-At Chusattayanond A."/>
        </authorList>
    </citation>
    <scope>BIOTECHNOLOGY</scope>
</reference>
<reference key="7">
    <citation type="journal article" date="2013" name="Planta">
        <title>Fusaric acid induction of programmed cell death modulated through nitric oxide signalling in tobacco suspension cells.</title>
        <authorList>
            <person name="Jiao J."/>
            <person name="Zhou B."/>
            <person name="Zhu X."/>
            <person name="Gao Z."/>
            <person name="Liang Y."/>
        </authorList>
    </citation>
    <scope>BIOTECHNOLOGY</scope>
</reference>
<reference key="8">
    <citation type="journal article" date="2013" name="PLoS ONE">
        <title>Contamination of bananas with beauvericin and fusaric acid produced by Fusarium oxysporum f. sp. cubense.</title>
        <authorList>
            <person name="Li C."/>
            <person name="Zuo C."/>
            <person name="Deng G."/>
            <person name="Kuang R."/>
            <person name="Yang Q."/>
            <person name="Hu C."/>
            <person name="Sheng O."/>
            <person name="Zhang S."/>
            <person name="Ma L."/>
            <person name="Wei Y."/>
            <person name="Yang J."/>
            <person name="Liu S."/>
            <person name="Biswas M.K."/>
            <person name="Viljoen A."/>
            <person name="Yi G."/>
        </authorList>
    </citation>
    <scope>BIOTECHNOLOGY</scope>
</reference>
<reference key="9">
    <citation type="journal article" date="2014" name="Appl. Microbiol. Biotechnol.">
        <title>Characterization of the fusaric acid gene cluster in Fusarium fujikuroi.</title>
        <authorList>
            <person name="Niehaus E.M."/>
            <person name="von Bargen K.W."/>
            <person name="Espino J.J."/>
            <person name="Pfannmueller A."/>
            <person name="Humpf H.U."/>
            <person name="Tudzynski B."/>
        </authorList>
    </citation>
    <scope>FUNCTION</scope>
    <scope>INDUCTION</scope>
</reference>
<reference key="10">
    <citation type="journal article" date="2016" name="Environ. Microbiol.">
        <title>Two separate key enzymes and two pathway-specific transcription factors are involved in fusaric acid biosynthesis in Fusarium fujikuroi.</title>
        <authorList>
            <person name="Studt L."/>
            <person name="Janevska S."/>
            <person name="Niehaus E.M."/>
            <person name="Burkhardt I."/>
            <person name="Arndt B."/>
            <person name="Sieber C.M."/>
            <person name="Humpf H.U."/>
            <person name="Dickschat J.S."/>
            <person name="Tudzynski B."/>
        </authorList>
    </citation>
    <scope>FUNCTION</scope>
    <scope>CATALYTIC ACTIVITY</scope>
</reference>
<comment type="function">
    <text evidence="10 11">Homoserine O-acetyltransferase; part of the gene cluster that mediates the biosynthesis of fusaric acid, a mycotoxin with low to moderate toxicity to animals and humans, but with high phytotoxic properties (PubMed:24389666, PubMed:26662839). L-aspartate is suggested as fusaric acid amino acid precursor that is activated and further processed to O-acetyl-L-homoserine by cluster enzymes aspartate kinase FUB3 and homoserine O-acetyltransferase FUB5, as well as enzymes of the primary metabolism (PubMed:26662839). The polyketide synthase (PKS) FUB1 generates the triketide trans-2-hexenal which is presumptively released by the hydrolase FUB4 and linked to the NRPS-bound amino acid precursor by NAD(P)-dependent dehydrogenase FUB6 (PubMed:26662839). FUB1, FUB4, and the non-canonical NRPS Fub8 may form an enzyme complex (PubMed:26662839). Further processing of the NRPS-bound intermediate might be carried out by FUB6 and the sulfhydrylase FUB7, enabling a spontaneous electrocyclization to close the carbon backbone of fusaric acid (PubMed:26662839). Dihydrofusaric acid is likely to be released via reduction by the thioester reductase (TR) domain of FUB8 whereupon the final oxidation to fusaric acid may (also) be performed by the FMN-dependent dehydrogenase FUB9 (PubMed:26662839).</text>
</comment>
<comment type="catalytic activity">
    <reaction evidence="14">
        <text>L-homoserine + acetyl-CoA = O-acetyl-L-homoserine + CoA</text>
        <dbReference type="Rhea" id="RHEA:13701"/>
        <dbReference type="ChEBI" id="CHEBI:57287"/>
        <dbReference type="ChEBI" id="CHEBI:57288"/>
        <dbReference type="ChEBI" id="CHEBI:57476"/>
        <dbReference type="ChEBI" id="CHEBI:57716"/>
        <dbReference type="EC" id="2.3.1.31"/>
    </reaction>
</comment>
<comment type="pathway">
    <text evidence="11">Mycotoxin biosynthesis.</text>
</comment>
<comment type="induction">
    <text evidence="10">Expressed under high amounts of nitrogen via regulation by AREB (PubMed:24389666). Moreover, components of the fungal-specific velvet complex VEL1 and LAE1 act also as positive regulators of expression (PubMed:24389666). Finally, the pH regulator PACC acts as activator of FUB expression after the pH shift to alkaline ambient conditions (PubMed:24389666).</text>
</comment>
<comment type="biotechnology">
    <text evidence="3 4 5 6 7 8 9">Fusaric acid is phytotoxic to plants such as cotton and banana (PubMed:20955724, PubMed:23922960). It has been shown to induce programmed cell death in plants (PubMed:16868776, PubMed:23838885). In addition to a mild toxicity to animals, fusaric acid exhibits acanthamoebicidal, antioomycete, and antimycobacterial activities (PubMed:17927749, PubMed:21811925, PubMed:22864988).</text>
</comment>
<comment type="similarity">
    <text evidence="13">Belongs to the AB hydrolase superfamily. MetX family.</text>
</comment>
<evidence type="ECO:0000255" key="1"/>
<evidence type="ECO:0000256" key="2">
    <source>
        <dbReference type="SAM" id="MobiDB-lite"/>
    </source>
</evidence>
<evidence type="ECO:0000269" key="3">
    <source>
    </source>
</evidence>
<evidence type="ECO:0000269" key="4">
    <source>
    </source>
</evidence>
<evidence type="ECO:0000269" key="5">
    <source>
    </source>
</evidence>
<evidence type="ECO:0000269" key="6">
    <source>
    </source>
</evidence>
<evidence type="ECO:0000269" key="7">
    <source>
    </source>
</evidence>
<evidence type="ECO:0000269" key="8">
    <source>
    </source>
</evidence>
<evidence type="ECO:0000269" key="9">
    <source>
    </source>
</evidence>
<evidence type="ECO:0000269" key="10">
    <source>
    </source>
</evidence>
<evidence type="ECO:0000269" key="11">
    <source>
    </source>
</evidence>
<evidence type="ECO:0000303" key="12">
    <source>
    </source>
</evidence>
<evidence type="ECO:0000305" key="13"/>
<evidence type="ECO:0000305" key="14">
    <source>
    </source>
</evidence>
<protein>
    <recommendedName>
        <fullName evidence="12">Homoserine O-acetyltransferase FUB5</fullName>
        <ecNumber evidence="14">2.3.1.31</ecNumber>
    </recommendedName>
    <alternativeName>
        <fullName evidence="12">Fusaric acid biosynthesis protein 5</fullName>
    </alternativeName>
</protein>
<name>FUB5_GIBF5</name>
<organism>
    <name type="scientific">Gibberella fujikuroi (strain CBS 195.34 / IMI 58289 / NRRL A-6831)</name>
    <name type="common">Bakanae and foot rot disease fungus</name>
    <name type="synonym">Fusarium fujikuroi</name>
    <dbReference type="NCBI Taxonomy" id="1279085"/>
    <lineage>
        <taxon>Eukaryota</taxon>
        <taxon>Fungi</taxon>
        <taxon>Dikarya</taxon>
        <taxon>Ascomycota</taxon>
        <taxon>Pezizomycotina</taxon>
        <taxon>Sordariomycetes</taxon>
        <taxon>Hypocreomycetidae</taxon>
        <taxon>Hypocreales</taxon>
        <taxon>Nectriaceae</taxon>
        <taxon>Fusarium</taxon>
        <taxon>Fusarium fujikuroi species complex</taxon>
    </lineage>
</organism>
<proteinExistence type="evidence at protein level"/>